<proteinExistence type="inferred from homology"/>
<protein>
    <recommendedName>
        <fullName evidence="1">Chaperonin GroEL 2</fullName>
        <ecNumber evidence="1">5.6.1.7</ecNumber>
    </recommendedName>
    <alternativeName>
        <fullName evidence="1">60 kDa chaperonin 2</fullName>
    </alternativeName>
    <alternativeName>
        <fullName evidence="1">Chaperonin-60 2</fullName>
        <shortName evidence="1">Cpn60 2</shortName>
    </alternativeName>
</protein>
<dbReference type="EC" id="5.6.1.7" evidence="1"/>
<dbReference type="EMBL" id="CP000252">
    <property type="protein sequence ID" value="ABC77374.1"/>
    <property type="molecule type" value="Genomic_DNA"/>
</dbReference>
<dbReference type="RefSeq" id="WP_011417396.1">
    <property type="nucleotide sequence ID" value="NC_007759.1"/>
</dbReference>
<dbReference type="SMR" id="Q2LTG7"/>
<dbReference type="FunCoup" id="Q2LTG7">
    <property type="interactions" value="668"/>
</dbReference>
<dbReference type="STRING" id="56780.SYN_03223"/>
<dbReference type="KEGG" id="sat:SYN_03223"/>
<dbReference type="eggNOG" id="COG0459">
    <property type="taxonomic scope" value="Bacteria"/>
</dbReference>
<dbReference type="HOGENOM" id="CLU_016503_3_0_7"/>
<dbReference type="InParanoid" id="Q2LTG7"/>
<dbReference type="OrthoDB" id="9766614at2"/>
<dbReference type="Proteomes" id="UP000001933">
    <property type="component" value="Chromosome"/>
</dbReference>
<dbReference type="GO" id="GO:0005737">
    <property type="term" value="C:cytoplasm"/>
    <property type="evidence" value="ECO:0007669"/>
    <property type="project" value="UniProtKB-SubCell"/>
</dbReference>
<dbReference type="GO" id="GO:0005524">
    <property type="term" value="F:ATP binding"/>
    <property type="evidence" value="ECO:0007669"/>
    <property type="project" value="UniProtKB-UniRule"/>
</dbReference>
<dbReference type="GO" id="GO:0140662">
    <property type="term" value="F:ATP-dependent protein folding chaperone"/>
    <property type="evidence" value="ECO:0007669"/>
    <property type="project" value="InterPro"/>
</dbReference>
<dbReference type="GO" id="GO:0016853">
    <property type="term" value="F:isomerase activity"/>
    <property type="evidence" value="ECO:0007669"/>
    <property type="project" value="UniProtKB-KW"/>
</dbReference>
<dbReference type="GO" id="GO:0051082">
    <property type="term" value="F:unfolded protein binding"/>
    <property type="evidence" value="ECO:0007669"/>
    <property type="project" value="UniProtKB-UniRule"/>
</dbReference>
<dbReference type="GO" id="GO:0042026">
    <property type="term" value="P:protein refolding"/>
    <property type="evidence" value="ECO:0007669"/>
    <property type="project" value="UniProtKB-UniRule"/>
</dbReference>
<dbReference type="CDD" id="cd03344">
    <property type="entry name" value="GroEL"/>
    <property type="match status" value="1"/>
</dbReference>
<dbReference type="FunFam" id="1.10.560.10:FF:000001">
    <property type="entry name" value="60 kDa chaperonin"/>
    <property type="match status" value="1"/>
</dbReference>
<dbReference type="FunFam" id="3.50.7.10:FF:000001">
    <property type="entry name" value="60 kDa chaperonin"/>
    <property type="match status" value="1"/>
</dbReference>
<dbReference type="Gene3D" id="3.50.7.10">
    <property type="entry name" value="GroEL"/>
    <property type="match status" value="1"/>
</dbReference>
<dbReference type="Gene3D" id="1.10.560.10">
    <property type="entry name" value="GroEL-like equatorial domain"/>
    <property type="match status" value="1"/>
</dbReference>
<dbReference type="Gene3D" id="3.30.260.10">
    <property type="entry name" value="TCP-1-like chaperonin intermediate domain"/>
    <property type="match status" value="1"/>
</dbReference>
<dbReference type="HAMAP" id="MF_00600">
    <property type="entry name" value="CH60"/>
    <property type="match status" value="1"/>
</dbReference>
<dbReference type="InterPro" id="IPR018370">
    <property type="entry name" value="Chaperonin_Cpn60_CS"/>
</dbReference>
<dbReference type="InterPro" id="IPR001844">
    <property type="entry name" value="Cpn60/GroEL"/>
</dbReference>
<dbReference type="InterPro" id="IPR002423">
    <property type="entry name" value="Cpn60/GroEL/TCP-1"/>
</dbReference>
<dbReference type="InterPro" id="IPR027409">
    <property type="entry name" value="GroEL-like_apical_dom_sf"/>
</dbReference>
<dbReference type="InterPro" id="IPR027413">
    <property type="entry name" value="GROEL-like_equatorial_sf"/>
</dbReference>
<dbReference type="InterPro" id="IPR027410">
    <property type="entry name" value="TCP-1-like_intermed_sf"/>
</dbReference>
<dbReference type="NCBIfam" id="TIGR02348">
    <property type="entry name" value="GroEL"/>
    <property type="match status" value="1"/>
</dbReference>
<dbReference type="NCBIfam" id="NF000592">
    <property type="entry name" value="PRK00013.1"/>
    <property type="match status" value="1"/>
</dbReference>
<dbReference type="NCBIfam" id="NF009487">
    <property type="entry name" value="PRK12849.1"/>
    <property type="match status" value="1"/>
</dbReference>
<dbReference type="NCBIfam" id="NF009488">
    <property type="entry name" value="PRK12850.1"/>
    <property type="match status" value="1"/>
</dbReference>
<dbReference type="NCBIfam" id="NF009489">
    <property type="entry name" value="PRK12851.1"/>
    <property type="match status" value="1"/>
</dbReference>
<dbReference type="PANTHER" id="PTHR45633">
    <property type="entry name" value="60 KDA HEAT SHOCK PROTEIN, MITOCHONDRIAL"/>
    <property type="match status" value="1"/>
</dbReference>
<dbReference type="Pfam" id="PF00118">
    <property type="entry name" value="Cpn60_TCP1"/>
    <property type="match status" value="1"/>
</dbReference>
<dbReference type="PRINTS" id="PR00298">
    <property type="entry name" value="CHAPERONIN60"/>
</dbReference>
<dbReference type="SUPFAM" id="SSF52029">
    <property type="entry name" value="GroEL apical domain-like"/>
    <property type="match status" value="1"/>
</dbReference>
<dbReference type="SUPFAM" id="SSF48592">
    <property type="entry name" value="GroEL equatorial domain-like"/>
    <property type="match status" value="1"/>
</dbReference>
<dbReference type="SUPFAM" id="SSF54849">
    <property type="entry name" value="GroEL-intermediate domain like"/>
    <property type="match status" value="1"/>
</dbReference>
<dbReference type="PROSITE" id="PS00296">
    <property type="entry name" value="CHAPERONINS_CPN60"/>
    <property type="match status" value="1"/>
</dbReference>
<name>CH602_SYNAS</name>
<accession>Q2LTG7</accession>
<reference key="1">
    <citation type="journal article" date="2007" name="Proc. Natl. Acad. Sci. U.S.A.">
        <title>The genome of Syntrophus aciditrophicus: life at the thermodynamic limit of microbial growth.</title>
        <authorList>
            <person name="McInerney M.J."/>
            <person name="Rohlin L."/>
            <person name="Mouttaki H."/>
            <person name="Kim U."/>
            <person name="Krupp R.S."/>
            <person name="Rios-Hernandez L."/>
            <person name="Sieber J."/>
            <person name="Struchtemeyer C.G."/>
            <person name="Bhattacharyya A."/>
            <person name="Campbell J.W."/>
            <person name="Gunsalus R.P."/>
        </authorList>
    </citation>
    <scope>NUCLEOTIDE SEQUENCE [LARGE SCALE GENOMIC DNA]</scope>
    <source>
        <strain>SB</strain>
    </source>
</reference>
<comment type="function">
    <text evidence="1">Together with its co-chaperonin GroES, plays an essential role in assisting protein folding. The GroEL-GroES system forms a nano-cage that allows encapsulation of the non-native substrate proteins and provides a physical environment optimized to promote and accelerate protein folding.</text>
</comment>
<comment type="catalytic activity">
    <reaction evidence="1">
        <text>ATP + H2O + a folded polypeptide = ADP + phosphate + an unfolded polypeptide.</text>
        <dbReference type="EC" id="5.6.1.7"/>
    </reaction>
</comment>
<comment type="subunit">
    <text evidence="1">Forms a cylinder of 14 subunits composed of two heptameric rings stacked back-to-back. Interacts with the co-chaperonin GroES.</text>
</comment>
<comment type="subcellular location">
    <subcellularLocation>
        <location evidence="1">Cytoplasm</location>
    </subcellularLocation>
</comment>
<comment type="similarity">
    <text evidence="1">Belongs to the chaperonin (HSP60) family.</text>
</comment>
<evidence type="ECO:0000255" key="1">
    <source>
        <dbReference type="HAMAP-Rule" id="MF_00600"/>
    </source>
</evidence>
<evidence type="ECO:0000256" key="2">
    <source>
        <dbReference type="SAM" id="MobiDB-lite"/>
    </source>
</evidence>
<gene>
    <name evidence="1" type="primary">groEL2</name>
    <name evidence="1" type="synonym">groL2</name>
    <name type="ordered locus">SYNAS_14950</name>
    <name type="ORF">SYN_03223</name>
</gene>
<organism>
    <name type="scientific">Syntrophus aciditrophicus (strain SB)</name>
    <dbReference type="NCBI Taxonomy" id="56780"/>
    <lineage>
        <taxon>Bacteria</taxon>
        <taxon>Pseudomonadati</taxon>
        <taxon>Thermodesulfobacteriota</taxon>
        <taxon>Syntrophia</taxon>
        <taxon>Syntrophales</taxon>
        <taxon>Syntrophaceae</taxon>
        <taxon>Syntrophus</taxon>
    </lineage>
</organism>
<keyword id="KW-0067">ATP-binding</keyword>
<keyword id="KW-0143">Chaperone</keyword>
<keyword id="KW-0963">Cytoplasm</keyword>
<keyword id="KW-0413">Isomerase</keyword>
<keyword id="KW-0547">Nucleotide-binding</keyword>
<keyword id="KW-1185">Reference proteome</keyword>
<feature type="chain" id="PRO_0000257011" description="Chaperonin GroEL 2">
    <location>
        <begin position="1"/>
        <end position="545"/>
    </location>
</feature>
<feature type="region of interest" description="Disordered" evidence="2">
    <location>
        <begin position="526"/>
        <end position="545"/>
    </location>
</feature>
<feature type="compositionally biased region" description="Gly residues" evidence="2">
    <location>
        <begin position="536"/>
        <end position="545"/>
    </location>
</feature>
<feature type="binding site" evidence="1">
    <location>
        <begin position="30"/>
        <end position="33"/>
    </location>
    <ligand>
        <name>ATP</name>
        <dbReference type="ChEBI" id="CHEBI:30616"/>
    </ligand>
</feature>
<feature type="binding site" evidence="1">
    <location>
        <position position="51"/>
    </location>
    <ligand>
        <name>ATP</name>
        <dbReference type="ChEBI" id="CHEBI:30616"/>
    </ligand>
</feature>
<feature type="binding site" evidence="1">
    <location>
        <begin position="87"/>
        <end position="91"/>
    </location>
    <ligand>
        <name>ATP</name>
        <dbReference type="ChEBI" id="CHEBI:30616"/>
    </ligand>
</feature>
<feature type="binding site" evidence="1">
    <location>
        <position position="415"/>
    </location>
    <ligand>
        <name>ATP</name>
        <dbReference type="ChEBI" id="CHEBI:30616"/>
    </ligand>
</feature>
<feature type="binding site" evidence="1">
    <location>
        <position position="494"/>
    </location>
    <ligand>
        <name>ATP</name>
        <dbReference type="ChEBI" id="CHEBI:30616"/>
    </ligand>
</feature>
<sequence length="545" mass="58258">MGAKLLQYDEEARKSILNGVNALADAVKVTLGPKGRNVIIDKSFGAPTVTKDGVTVAKEVELEDKFENMGAQMVREVASKTSDVAGDGTTTATILAQAIYREGAKTVAAGSNPMDVKRGIEKAVAAVVTELKNISKPTKDQKEIAQVGTISANNDETIGNIIAEAMGKVGKEGVITVEEAKGLETELEIVEGMQFDRGYLSPYFVTNPEKMEVSLEDALILIYEKKISGMKDLLPILEQIAKMGRPLLIIAEDIEGEALATLVVNKIRGTLHVAAVKAPGFGDRRKAMLEDIAILTGGTVISEDMGYKLENTRLEDLGRAKRIQIDKDNTTIIDGAGERAALEGRVKQIRAQIDETTSDYDREKLQERLAKLVGGVAVIKVGAATETEMKEKKARVEDALNATRAAVEEGIVPGGGVAYIRTLPILEALKLEGDEQVGVNIVRKALEEPLKMIAANAGMEGTIVVEKVKEQSGAFGFNARTEVYEDMIEAGVIDPTKVTRFALQNAASVASLMLTTQCMIAEKPEEKGAGMPGMPPGGGYPGMGM</sequence>